<protein>
    <recommendedName>
        <fullName evidence="1">tRNA pseudouridine synthase A</fullName>
        <ecNumber evidence="1">5.4.99.12</ecNumber>
    </recommendedName>
    <alternativeName>
        <fullName evidence="1">tRNA pseudouridine(38-40) synthase</fullName>
    </alternativeName>
    <alternativeName>
        <fullName evidence="1">tRNA pseudouridylate synthase I</fullName>
    </alternativeName>
    <alternativeName>
        <fullName evidence="1">tRNA-uridine isomerase I</fullName>
    </alternativeName>
</protein>
<sequence length="241" mass="28316">MTYKLKISYDGSFFRGYAKQKDENLITVQSELEKYLSLFFNTKISTFGSGRTDKYVHAIDQTVSFKCDSDYDPKSIQNFLNSKLTNIYVNSIEKVPNSFHARFSIKSKTYMYVINTGEFDVFKQRYEYQYNKSIDIKKCEDIINLFIGTKDFLSFSTSKLENTTRTIRWIRIIKKNKKIYIFINGEGFLRNMVRMIVGIILTYCENKITYQEVLDLFKNPKKGSAVIKVPGCGLYLYRTIY</sequence>
<comment type="function">
    <text evidence="1">Formation of pseudouridine at positions 38, 39 and 40 in the anticodon stem and loop of transfer RNAs.</text>
</comment>
<comment type="catalytic activity">
    <reaction evidence="1">
        <text>uridine(38/39/40) in tRNA = pseudouridine(38/39/40) in tRNA</text>
        <dbReference type="Rhea" id="RHEA:22376"/>
        <dbReference type="Rhea" id="RHEA-COMP:10085"/>
        <dbReference type="Rhea" id="RHEA-COMP:10087"/>
        <dbReference type="ChEBI" id="CHEBI:65314"/>
        <dbReference type="ChEBI" id="CHEBI:65315"/>
        <dbReference type="EC" id="5.4.99.12"/>
    </reaction>
</comment>
<comment type="subunit">
    <text evidence="1">Homodimer.</text>
</comment>
<comment type="similarity">
    <text evidence="1">Belongs to the tRNA pseudouridine synthase TruA family.</text>
</comment>
<dbReference type="EC" id="5.4.99.12" evidence="1"/>
<dbReference type="EMBL" id="BA000026">
    <property type="protein sequence ID" value="BAC44760.1"/>
    <property type="molecule type" value="Genomic_DNA"/>
</dbReference>
<dbReference type="RefSeq" id="WP_011077789.1">
    <property type="nucleotide sequence ID" value="NC_004432.1"/>
</dbReference>
<dbReference type="SMR" id="Q8CXQ1"/>
<dbReference type="FunCoup" id="Q8CXQ1">
    <property type="interactions" value="246"/>
</dbReference>
<dbReference type="STRING" id="272633.gene:10732094"/>
<dbReference type="KEGG" id="mpe:MYPE9740"/>
<dbReference type="eggNOG" id="COG0101">
    <property type="taxonomic scope" value="Bacteria"/>
</dbReference>
<dbReference type="HOGENOM" id="CLU_014673_0_1_14"/>
<dbReference type="InParanoid" id="Q8CXQ1"/>
<dbReference type="Proteomes" id="UP000002522">
    <property type="component" value="Chromosome"/>
</dbReference>
<dbReference type="GO" id="GO:0003723">
    <property type="term" value="F:RNA binding"/>
    <property type="evidence" value="ECO:0007669"/>
    <property type="project" value="InterPro"/>
</dbReference>
<dbReference type="GO" id="GO:0160147">
    <property type="term" value="F:tRNA pseudouridine(38-40) synthase activity"/>
    <property type="evidence" value="ECO:0007669"/>
    <property type="project" value="UniProtKB-EC"/>
</dbReference>
<dbReference type="GO" id="GO:0031119">
    <property type="term" value="P:tRNA pseudouridine synthesis"/>
    <property type="evidence" value="ECO:0007669"/>
    <property type="project" value="UniProtKB-UniRule"/>
</dbReference>
<dbReference type="CDD" id="cd02570">
    <property type="entry name" value="PseudoU_synth_EcTruA"/>
    <property type="match status" value="1"/>
</dbReference>
<dbReference type="Gene3D" id="3.30.70.660">
    <property type="entry name" value="Pseudouridine synthase I, catalytic domain, C-terminal subdomain"/>
    <property type="match status" value="1"/>
</dbReference>
<dbReference type="Gene3D" id="3.30.70.580">
    <property type="entry name" value="Pseudouridine synthase I, catalytic domain, N-terminal subdomain"/>
    <property type="match status" value="1"/>
</dbReference>
<dbReference type="HAMAP" id="MF_00171">
    <property type="entry name" value="TruA"/>
    <property type="match status" value="1"/>
</dbReference>
<dbReference type="InterPro" id="IPR020103">
    <property type="entry name" value="PsdUridine_synth_cat_dom_sf"/>
</dbReference>
<dbReference type="InterPro" id="IPR001406">
    <property type="entry name" value="PsdUridine_synth_TruA"/>
</dbReference>
<dbReference type="InterPro" id="IPR020097">
    <property type="entry name" value="PsdUridine_synth_TruA_a/b_dom"/>
</dbReference>
<dbReference type="InterPro" id="IPR020095">
    <property type="entry name" value="PsdUridine_synth_TruA_C"/>
</dbReference>
<dbReference type="InterPro" id="IPR020094">
    <property type="entry name" value="TruA/RsuA/RluB/E/F_N"/>
</dbReference>
<dbReference type="NCBIfam" id="TIGR00071">
    <property type="entry name" value="hisT_truA"/>
    <property type="match status" value="1"/>
</dbReference>
<dbReference type="PANTHER" id="PTHR11142">
    <property type="entry name" value="PSEUDOURIDYLATE SYNTHASE"/>
    <property type="match status" value="1"/>
</dbReference>
<dbReference type="PANTHER" id="PTHR11142:SF0">
    <property type="entry name" value="TRNA PSEUDOURIDINE SYNTHASE-LIKE 1"/>
    <property type="match status" value="1"/>
</dbReference>
<dbReference type="Pfam" id="PF01416">
    <property type="entry name" value="PseudoU_synth_1"/>
    <property type="match status" value="2"/>
</dbReference>
<dbReference type="PIRSF" id="PIRSF001430">
    <property type="entry name" value="tRNA_psdUrid_synth"/>
    <property type="match status" value="1"/>
</dbReference>
<dbReference type="SUPFAM" id="SSF55120">
    <property type="entry name" value="Pseudouridine synthase"/>
    <property type="match status" value="1"/>
</dbReference>
<proteinExistence type="inferred from homology"/>
<accession>Q8CXQ1</accession>
<feature type="chain" id="PRO_0000057412" description="tRNA pseudouridine synthase A">
    <location>
        <begin position="1"/>
        <end position="241"/>
    </location>
</feature>
<feature type="active site" description="Nucleophile" evidence="1">
    <location>
        <position position="53"/>
    </location>
</feature>
<feature type="binding site" evidence="1">
    <location>
        <position position="110"/>
    </location>
    <ligand>
        <name>substrate</name>
    </ligand>
</feature>
<gene>
    <name evidence="1" type="primary">truA</name>
    <name type="ordered locus">MYPE9740</name>
</gene>
<name>TRUA_MALP2</name>
<keyword id="KW-0413">Isomerase</keyword>
<keyword id="KW-1185">Reference proteome</keyword>
<keyword id="KW-0819">tRNA processing</keyword>
<reference key="1">
    <citation type="journal article" date="2002" name="Nucleic Acids Res.">
        <title>The complete genomic sequence of Mycoplasma penetrans, an intracellular bacterial pathogen in humans.</title>
        <authorList>
            <person name="Sasaki Y."/>
            <person name="Ishikawa J."/>
            <person name="Yamashita A."/>
            <person name="Oshima K."/>
            <person name="Kenri T."/>
            <person name="Furuya K."/>
            <person name="Yoshino C."/>
            <person name="Horino A."/>
            <person name="Shiba T."/>
            <person name="Sasaki T."/>
            <person name="Hattori M."/>
        </authorList>
    </citation>
    <scope>NUCLEOTIDE SEQUENCE [LARGE SCALE GENOMIC DNA]</scope>
    <source>
        <strain>HF-2</strain>
    </source>
</reference>
<organism>
    <name type="scientific">Malacoplasma penetrans (strain HF-2)</name>
    <name type="common">Mycoplasma penetrans</name>
    <dbReference type="NCBI Taxonomy" id="272633"/>
    <lineage>
        <taxon>Bacteria</taxon>
        <taxon>Bacillati</taxon>
        <taxon>Mycoplasmatota</taxon>
        <taxon>Mycoplasmoidales</taxon>
        <taxon>Mycoplasmoidaceae</taxon>
        <taxon>Malacoplasma</taxon>
    </lineage>
</organism>
<evidence type="ECO:0000255" key="1">
    <source>
        <dbReference type="HAMAP-Rule" id="MF_00171"/>
    </source>
</evidence>